<keyword id="KW-0687">Ribonucleoprotein</keyword>
<keyword id="KW-0689">Ribosomal protein</keyword>
<keyword id="KW-0694">RNA-binding</keyword>
<keyword id="KW-0699">rRNA-binding</keyword>
<protein>
    <recommendedName>
        <fullName evidence="1">Large ribosomal subunit protein bL21</fullName>
    </recommendedName>
    <alternativeName>
        <fullName evidence="2">50S ribosomal protein L21</fullName>
    </alternativeName>
</protein>
<feature type="chain" id="PRO_1000087008" description="Large ribosomal subunit protein bL21">
    <location>
        <begin position="1"/>
        <end position="104"/>
    </location>
</feature>
<evidence type="ECO:0000255" key="1">
    <source>
        <dbReference type="HAMAP-Rule" id="MF_01363"/>
    </source>
</evidence>
<evidence type="ECO:0000305" key="2"/>
<dbReference type="EMBL" id="CP000702">
    <property type="protein sequence ID" value="ABQ47350.1"/>
    <property type="molecule type" value="Genomic_DNA"/>
</dbReference>
<dbReference type="RefSeq" id="WP_004081746.1">
    <property type="nucleotide sequence ID" value="NC_009486.1"/>
</dbReference>
<dbReference type="SMR" id="A5IMC7"/>
<dbReference type="STRING" id="390874.Tpet_1336"/>
<dbReference type="KEGG" id="tpt:Tpet_1336"/>
<dbReference type="eggNOG" id="COG0261">
    <property type="taxonomic scope" value="Bacteria"/>
</dbReference>
<dbReference type="HOGENOM" id="CLU_061463_3_2_0"/>
<dbReference type="Proteomes" id="UP000006558">
    <property type="component" value="Chromosome"/>
</dbReference>
<dbReference type="GO" id="GO:0005737">
    <property type="term" value="C:cytoplasm"/>
    <property type="evidence" value="ECO:0007669"/>
    <property type="project" value="UniProtKB-ARBA"/>
</dbReference>
<dbReference type="GO" id="GO:1990904">
    <property type="term" value="C:ribonucleoprotein complex"/>
    <property type="evidence" value="ECO:0007669"/>
    <property type="project" value="UniProtKB-KW"/>
</dbReference>
<dbReference type="GO" id="GO:0005840">
    <property type="term" value="C:ribosome"/>
    <property type="evidence" value="ECO:0007669"/>
    <property type="project" value="UniProtKB-KW"/>
</dbReference>
<dbReference type="GO" id="GO:0019843">
    <property type="term" value="F:rRNA binding"/>
    <property type="evidence" value="ECO:0007669"/>
    <property type="project" value="UniProtKB-UniRule"/>
</dbReference>
<dbReference type="GO" id="GO:0003735">
    <property type="term" value="F:structural constituent of ribosome"/>
    <property type="evidence" value="ECO:0007669"/>
    <property type="project" value="InterPro"/>
</dbReference>
<dbReference type="GO" id="GO:0006412">
    <property type="term" value="P:translation"/>
    <property type="evidence" value="ECO:0007669"/>
    <property type="project" value="UniProtKB-UniRule"/>
</dbReference>
<dbReference type="HAMAP" id="MF_01363">
    <property type="entry name" value="Ribosomal_bL21"/>
    <property type="match status" value="1"/>
</dbReference>
<dbReference type="InterPro" id="IPR028909">
    <property type="entry name" value="bL21-like"/>
</dbReference>
<dbReference type="InterPro" id="IPR036164">
    <property type="entry name" value="bL21-like_sf"/>
</dbReference>
<dbReference type="InterPro" id="IPR001787">
    <property type="entry name" value="Ribosomal_bL21"/>
</dbReference>
<dbReference type="InterPro" id="IPR018258">
    <property type="entry name" value="Ribosomal_bL21_CS"/>
</dbReference>
<dbReference type="NCBIfam" id="TIGR00061">
    <property type="entry name" value="L21"/>
    <property type="match status" value="1"/>
</dbReference>
<dbReference type="PANTHER" id="PTHR21349">
    <property type="entry name" value="50S RIBOSOMAL PROTEIN L21"/>
    <property type="match status" value="1"/>
</dbReference>
<dbReference type="PANTHER" id="PTHR21349:SF0">
    <property type="entry name" value="LARGE RIBOSOMAL SUBUNIT PROTEIN BL21M"/>
    <property type="match status" value="1"/>
</dbReference>
<dbReference type="Pfam" id="PF00829">
    <property type="entry name" value="Ribosomal_L21p"/>
    <property type="match status" value="1"/>
</dbReference>
<dbReference type="SUPFAM" id="SSF141091">
    <property type="entry name" value="L21p-like"/>
    <property type="match status" value="1"/>
</dbReference>
<dbReference type="PROSITE" id="PS01169">
    <property type="entry name" value="RIBOSOMAL_L21"/>
    <property type="match status" value="1"/>
</dbReference>
<accession>A5IMC7</accession>
<comment type="function">
    <text evidence="1">This protein binds to 23S rRNA in the presence of protein L20.</text>
</comment>
<comment type="subunit">
    <text evidence="1">Part of the 50S ribosomal subunit. Contacts protein L20.</text>
</comment>
<comment type="similarity">
    <text evidence="1">Belongs to the bacterial ribosomal protein bL21 family.</text>
</comment>
<name>RL21_THEP1</name>
<organism>
    <name type="scientific">Thermotoga petrophila (strain ATCC BAA-488 / DSM 13995 / JCM 10881 / RKU-1)</name>
    <dbReference type="NCBI Taxonomy" id="390874"/>
    <lineage>
        <taxon>Bacteria</taxon>
        <taxon>Thermotogati</taxon>
        <taxon>Thermotogota</taxon>
        <taxon>Thermotogae</taxon>
        <taxon>Thermotogales</taxon>
        <taxon>Thermotogaceae</taxon>
        <taxon>Thermotoga</taxon>
    </lineage>
</organism>
<gene>
    <name evidence="1" type="primary">rplU</name>
    <name type="ordered locus">Tpet_1336</name>
</gene>
<sequence>MYAIVETAGRQYRVEEGKILYTEKQKDYSPGDEIVFDRVVFVRKDGEVLVGKPYVEGAKVVGKVLEHAKARKVKTVKYRPRKNSKVEKGHRQWYTAIKIEKIEL</sequence>
<proteinExistence type="inferred from homology"/>
<reference key="1">
    <citation type="submission" date="2007-05" db="EMBL/GenBank/DDBJ databases">
        <title>Complete sequence of Thermotoga petrophila RKU-1.</title>
        <authorList>
            <consortium name="US DOE Joint Genome Institute"/>
            <person name="Copeland A."/>
            <person name="Lucas S."/>
            <person name="Lapidus A."/>
            <person name="Barry K."/>
            <person name="Glavina del Rio T."/>
            <person name="Dalin E."/>
            <person name="Tice H."/>
            <person name="Pitluck S."/>
            <person name="Sims D."/>
            <person name="Brettin T."/>
            <person name="Bruce D."/>
            <person name="Detter J.C."/>
            <person name="Han C."/>
            <person name="Tapia R."/>
            <person name="Schmutz J."/>
            <person name="Larimer F."/>
            <person name="Land M."/>
            <person name="Hauser L."/>
            <person name="Kyrpides N."/>
            <person name="Mikhailova N."/>
            <person name="Nelson K."/>
            <person name="Gogarten J.P."/>
            <person name="Noll K."/>
            <person name="Richardson P."/>
        </authorList>
    </citation>
    <scope>NUCLEOTIDE SEQUENCE [LARGE SCALE GENOMIC DNA]</scope>
    <source>
        <strain>ATCC BAA-488 / DSM 13995 / JCM 10881 / RKU-1</strain>
    </source>
</reference>